<accession>C1ES32</accession>
<dbReference type="EC" id="2.7.4.9" evidence="1"/>
<dbReference type="EMBL" id="CP001407">
    <property type="protein sequence ID" value="ACO28164.1"/>
    <property type="molecule type" value="Genomic_DNA"/>
</dbReference>
<dbReference type="RefSeq" id="WP_000677233.1">
    <property type="nucleotide sequence ID" value="NZ_CP009318.1"/>
</dbReference>
<dbReference type="SMR" id="C1ES32"/>
<dbReference type="KEGG" id="bcx:BCA_0039"/>
<dbReference type="PATRIC" id="fig|572264.18.peg.92"/>
<dbReference type="Proteomes" id="UP000002210">
    <property type="component" value="Chromosome"/>
</dbReference>
<dbReference type="GO" id="GO:0005829">
    <property type="term" value="C:cytosol"/>
    <property type="evidence" value="ECO:0007669"/>
    <property type="project" value="TreeGrafter"/>
</dbReference>
<dbReference type="GO" id="GO:0005524">
    <property type="term" value="F:ATP binding"/>
    <property type="evidence" value="ECO:0007669"/>
    <property type="project" value="UniProtKB-UniRule"/>
</dbReference>
<dbReference type="GO" id="GO:0004798">
    <property type="term" value="F:dTMP kinase activity"/>
    <property type="evidence" value="ECO:0007669"/>
    <property type="project" value="UniProtKB-UniRule"/>
</dbReference>
<dbReference type="GO" id="GO:0006233">
    <property type="term" value="P:dTDP biosynthetic process"/>
    <property type="evidence" value="ECO:0007669"/>
    <property type="project" value="InterPro"/>
</dbReference>
<dbReference type="GO" id="GO:0006235">
    <property type="term" value="P:dTTP biosynthetic process"/>
    <property type="evidence" value="ECO:0007669"/>
    <property type="project" value="UniProtKB-UniRule"/>
</dbReference>
<dbReference type="GO" id="GO:0006227">
    <property type="term" value="P:dUDP biosynthetic process"/>
    <property type="evidence" value="ECO:0007669"/>
    <property type="project" value="TreeGrafter"/>
</dbReference>
<dbReference type="CDD" id="cd01672">
    <property type="entry name" value="TMPK"/>
    <property type="match status" value="1"/>
</dbReference>
<dbReference type="FunFam" id="3.40.50.300:FF:000225">
    <property type="entry name" value="Thymidylate kinase"/>
    <property type="match status" value="1"/>
</dbReference>
<dbReference type="Gene3D" id="3.40.50.300">
    <property type="entry name" value="P-loop containing nucleotide triphosphate hydrolases"/>
    <property type="match status" value="1"/>
</dbReference>
<dbReference type="HAMAP" id="MF_00165">
    <property type="entry name" value="Thymidylate_kinase"/>
    <property type="match status" value="1"/>
</dbReference>
<dbReference type="InterPro" id="IPR027417">
    <property type="entry name" value="P-loop_NTPase"/>
</dbReference>
<dbReference type="InterPro" id="IPR039430">
    <property type="entry name" value="Thymidylate_kin-like_dom"/>
</dbReference>
<dbReference type="InterPro" id="IPR018095">
    <property type="entry name" value="Thymidylate_kin_CS"/>
</dbReference>
<dbReference type="InterPro" id="IPR018094">
    <property type="entry name" value="Thymidylate_kinase"/>
</dbReference>
<dbReference type="NCBIfam" id="TIGR00041">
    <property type="entry name" value="DTMP_kinase"/>
    <property type="match status" value="1"/>
</dbReference>
<dbReference type="PANTHER" id="PTHR10344">
    <property type="entry name" value="THYMIDYLATE KINASE"/>
    <property type="match status" value="1"/>
</dbReference>
<dbReference type="PANTHER" id="PTHR10344:SF4">
    <property type="entry name" value="UMP-CMP KINASE 2, MITOCHONDRIAL"/>
    <property type="match status" value="1"/>
</dbReference>
<dbReference type="Pfam" id="PF02223">
    <property type="entry name" value="Thymidylate_kin"/>
    <property type="match status" value="1"/>
</dbReference>
<dbReference type="SUPFAM" id="SSF52540">
    <property type="entry name" value="P-loop containing nucleoside triphosphate hydrolases"/>
    <property type="match status" value="1"/>
</dbReference>
<dbReference type="PROSITE" id="PS01331">
    <property type="entry name" value="THYMIDYLATE_KINASE"/>
    <property type="match status" value="1"/>
</dbReference>
<sequence>MKGLFVTIEGPEGSGKTTLIQSLLPYFEQKEQKVMATREPGGIAISEDIRTILHKQEYTMMEARTEALLYAAARRQHLVEKVMPALNDDYLVLCDRFIDSSLAYQGYARGLGMDKVFEINRFATEDCMPSLTIYLDIEPEVGLARIAKDAGREVNRLDMEDISFHKRVREGYLQVVERFSDRIVLVNADQPMEKLIEEVIQVIEDKLL</sequence>
<name>KTHY_BACC3</name>
<proteinExistence type="inferred from homology"/>
<comment type="function">
    <text evidence="1">Phosphorylation of dTMP to form dTDP in both de novo and salvage pathways of dTTP synthesis.</text>
</comment>
<comment type="catalytic activity">
    <reaction evidence="1">
        <text>dTMP + ATP = dTDP + ADP</text>
        <dbReference type="Rhea" id="RHEA:13517"/>
        <dbReference type="ChEBI" id="CHEBI:30616"/>
        <dbReference type="ChEBI" id="CHEBI:58369"/>
        <dbReference type="ChEBI" id="CHEBI:63528"/>
        <dbReference type="ChEBI" id="CHEBI:456216"/>
        <dbReference type="EC" id="2.7.4.9"/>
    </reaction>
</comment>
<comment type="similarity">
    <text evidence="1">Belongs to the thymidylate kinase family.</text>
</comment>
<evidence type="ECO:0000255" key="1">
    <source>
        <dbReference type="HAMAP-Rule" id="MF_00165"/>
    </source>
</evidence>
<protein>
    <recommendedName>
        <fullName evidence="1">Thymidylate kinase</fullName>
        <ecNumber evidence="1">2.7.4.9</ecNumber>
    </recommendedName>
    <alternativeName>
        <fullName evidence="1">dTMP kinase</fullName>
    </alternativeName>
</protein>
<gene>
    <name evidence="1" type="primary">tmk</name>
    <name type="ordered locus">BCA_0039</name>
</gene>
<organism>
    <name type="scientific">Bacillus cereus (strain 03BB102)</name>
    <dbReference type="NCBI Taxonomy" id="572264"/>
    <lineage>
        <taxon>Bacteria</taxon>
        <taxon>Bacillati</taxon>
        <taxon>Bacillota</taxon>
        <taxon>Bacilli</taxon>
        <taxon>Bacillales</taxon>
        <taxon>Bacillaceae</taxon>
        <taxon>Bacillus</taxon>
        <taxon>Bacillus cereus group</taxon>
    </lineage>
</organism>
<keyword id="KW-0067">ATP-binding</keyword>
<keyword id="KW-0418">Kinase</keyword>
<keyword id="KW-0545">Nucleotide biosynthesis</keyword>
<keyword id="KW-0547">Nucleotide-binding</keyword>
<keyword id="KW-0808">Transferase</keyword>
<feature type="chain" id="PRO_1000123557" description="Thymidylate kinase">
    <location>
        <begin position="1"/>
        <end position="208"/>
    </location>
</feature>
<feature type="binding site" evidence="1">
    <location>
        <begin position="10"/>
        <end position="17"/>
    </location>
    <ligand>
        <name>ATP</name>
        <dbReference type="ChEBI" id="CHEBI:30616"/>
    </ligand>
</feature>
<reference key="1">
    <citation type="submission" date="2009-02" db="EMBL/GenBank/DDBJ databases">
        <title>Genome sequence of Bacillus cereus 03BB102.</title>
        <authorList>
            <person name="Dodson R.J."/>
            <person name="Jackson P."/>
            <person name="Munk A.C."/>
            <person name="Brettin T."/>
            <person name="Bruce D."/>
            <person name="Detter C."/>
            <person name="Tapia R."/>
            <person name="Han C."/>
            <person name="Sutton G."/>
            <person name="Sims D."/>
        </authorList>
    </citation>
    <scope>NUCLEOTIDE SEQUENCE [LARGE SCALE GENOMIC DNA]</scope>
    <source>
        <strain>03BB102</strain>
    </source>
</reference>